<proteinExistence type="evidence at protein level"/>
<gene>
    <name evidence="1" type="primary">bioA</name>
    <name type="ordered locus">BQ2027_MB1595</name>
</gene>
<keyword id="KW-0002">3D-structure</keyword>
<keyword id="KW-0032">Aminotransferase</keyword>
<keyword id="KW-0093">Biotin biosynthesis</keyword>
<keyword id="KW-0963">Cytoplasm</keyword>
<keyword id="KW-0663">Pyridoxal phosphate</keyword>
<keyword id="KW-1185">Reference proteome</keyword>
<keyword id="KW-0949">S-adenosyl-L-methionine</keyword>
<keyword id="KW-0808">Transferase</keyword>
<protein>
    <recommendedName>
        <fullName evidence="1">Adenosylmethionine-8-amino-7-oxononanoate aminotransferase</fullName>
        <ecNumber evidence="1">2.6.1.62</ecNumber>
    </recommendedName>
    <alternativeName>
        <fullName evidence="1">7,8-diamino-pelargonic acid aminotransferase</fullName>
        <shortName evidence="1">DAPA AT</shortName>
        <shortName evidence="1">DAPA aminotransferase</shortName>
    </alternativeName>
    <alternativeName>
        <fullName evidence="1">7,8-diaminononanoate synthase</fullName>
        <shortName evidence="1">DANS</shortName>
    </alternativeName>
    <alternativeName>
        <fullName evidence="1">Diaminopelargonic acid synthase</fullName>
    </alternativeName>
</protein>
<sequence length="437" mass="46319">MAAATGGLTPEQIIAVDGAHLWHPYSSIGREAVSPVVAVAAHGAWLTLIRDGQPIEVLDAMSSWWTAIHGHGHPALDQALTTQLRVMNHVMFGGLTHEPAARLAKLLVDITPAGLDTVFFSDSGSVSVEVAAKMALQYWRGRGLPGKRRLMTWRGGYHGDTFLAMSICDPHGGMHSLWTDVLAAQVFAPQVPRDYDPAYSAAFEAQLAQHAGELAAVVVEPVVQGAGGMRFHDPRYLHDLRDICRRYEVLLIFDEIATGFGRTGALFAADHAGVSPDIMCVGKALTGGYLSLAATLCTADVAHTISAGAAGALMHGPTFMANPLACAVSVASVELLLGQDWRTRITELAAGLTAGLDTARALPAVTDVRVCGAIGVIECDRPVDLAVATPAALDRGVWLRPFRNLVYAMPPYICTPAEITQITSAMVEVARLVGSLP</sequence>
<feature type="chain" id="PRO_0000120372" description="Adenosylmethionine-8-amino-7-oxononanoate aminotransferase">
    <location>
        <begin position="1"/>
        <end position="437"/>
    </location>
</feature>
<feature type="binding site" evidence="1">
    <location>
        <position position="64"/>
    </location>
    <ligand>
        <name>substrate</name>
    </ligand>
</feature>
<feature type="binding site" evidence="1">
    <location>
        <begin position="124"/>
        <end position="125"/>
    </location>
    <ligand>
        <name>pyridoxal 5'-phosphate</name>
        <dbReference type="ChEBI" id="CHEBI:597326"/>
    </ligand>
</feature>
<feature type="binding site" evidence="1">
    <location>
        <position position="157"/>
    </location>
    <ligand>
        <name>substrate</name>
    </ligand>
</feature>
<feature type="binding site" evidence="1">
    <location>
        <position position="254"/>
    </location>
    <ligand>
        <name>pyridoxal 5'-phosphate</name>
        <dbReference type="ChEBI" id="CHEBI:597326"/>
    </ligand>
</feature>
<feature type="binding site" evidence="1">
    <location>
        <position position="283"/>
    </location>
    <ligand>
        <name>substrate</name>
    </ligand>
</feature>
<feature type="binding site" evidence="1">
    <location>
        <position position="316"/>
    </location>
    <ligand>
        <name>substrate</name>
    </ligand>
</feature>
<feature type="binding site" evidence="1">
    <location>
        <begin position="317"/>
        <end position="318"/>
    </location>
    <ligand>
        <name>pyridoxal 5'-phosphate</name>
        <dbReference type="ChEBI" id="CHEBI:597326"/>
    </ligand>
</feature>
<feature type="binding site" evidence="1">
    <location>
        <position position="400"/>
    </location>
    <ligand>
        <name>substrate</name>
    </ligand>
</feature>
<feature type="site" description="Participates in the substrate recognition with KAPA and in a stacking interaction with the adenine ring of SAM" evidence="1">
    <location>
        <position position="25"/>
    </location>
</feature>
<feature type="modified residue" description="N6-(pyridoxal phosphate)lysine" evidence="1">
    <location>
        <position position="283"/>
    </location>
</feature>
<feature type="helix" evidence="3">
    <location>
        <begin position="10"/>
        <end position="20"/>
    </location>
</feature>
<feature type="strand" evidence="3">
    <location>
        <begin position="36"/>
        <end position="43"/>
    </location>
</feature>
<feature type="strand" evidence="3">
    <location>
        <begin position="45"/>
        <end position="50"/>
    </location>
</feature>
<feature type="strand" evidence="3">
    <location>
        <begin position="53"/>
        <end position="59"/>
    </location>
</feature>
<feature type="helix" evidence="3">
    <location>
        <begin position="62"/>
        <end position="65"/>
    </location>
</feature>
<feature type="helix" evidence="3">
    <location>
        <begin position="74"/>
        <end position="84"/>
    </location>
</feature>
<feature type="strand" evidence="3">
    <location>
        <begin position="92"/>
        <end position="96"/>
    </location>
</feature>
<feature type="helix" evidence="3">
    <location>
        <begin position="98"/>
        <end position="110"/>
    </location>
</feature>
<feature type="strand" evidence="3">
    <location>
        <begin position="115"/>
        <end position="123"/>
    </location>
</feature>
<feature type="helix" evidence="3">
    <location>
        <begin position="124"/>
        <end position="141"/>
    </location>
</feature>
<feature type="strand" evidence="3">
    <location>
        <begin position="149"/>
        <end position="153"/>
    </location>
</feature>
<feature type="helix" evidence="3">
    <location>
        <begin position="162"/>
        <end position="166"/>
    </location>
</feature>
<feature type="turn" evidence="3">
    <location>
        <begin position="170"/>
        <end position="174"/>
    </location>
</feature>
<feature type="helix" evidence="3">
    <location>
        <begin position="175"/>
        <end position="178"/>
    </location>
</feature>
<feature type="turn" evidence="3">
    <location>
        <begin position="179"/>
        <end position="181"/>
    </location>
</feature>
<feature type="strand" evidence="3">
    <location>
        <begin position="186"/>
        <end position="188"/>
    </location>
</feature>
<feature type="helix" evidence="3">
    <location>
        <begin position="197"/>
        <end position="210"/>
    </location>
</feature>
<feature type="helix" evidence="3">
    <location>
        <begin position="211"/>
        <end position="213"/>
    </location>
</feature>
<feature type="strand" evidence="3">
    <location>
        <begin position="214"/>
        <end position="219"/>
    </location>
</feature>
<feature type="strand" evidence="3">
    <location>
        <begin position="221"/>
        <end position="224"/>
    </location>
</feature>
<feature type="turn" evidence="3">
    <location>
        <begin position="226"/>
        <end position="228"/>
    </location>
</feature>
<feature type="helix" evidence="3">
    <location>
        <begin position="235"/>
        <end position="247"/>
    </location>
</feature>
<feature type="strand" evidence="3">
    <location>
        <begin position="250"/>
        <end position="254"/>
    </location>
</feature>
<feature type="turn" evidence="3">
    <location>
        <begin position="256"/>
        <end position="263"/>
    </location>
</feature>
<feature type="strand" evidence="3">
    <location>
        <begin position="264"/>
        <end position="267"/>
    </location>
</feature>
<feature type="helix" evidence="3">
    <location>
        <begin position="268"/>
        <end position="271"/>
    </location>
</feature>
<feature type="strand" evidence="3">
    <location>
        <begin position="277"/>
        <end position="281"/>
    </location>
</feature>
<feature type="helix" evidence="3">
    <location>
        <begin position="283"/>
        <end position="286"/>
    </location>
</feature>
<feature type="strand" evidence="3">
    <location>
        <begin position="293"/>
        <end position="298"/>
    </location>
</feature>
<feature type="helix" evidence="3">
    <location>
        <begin position="299"/>
        <end position="307"/>
    </location>
</feature>
<feature type="strand" evidence="3">
    <location>
        <begin position="308"/>
        <end position="310"/>
    </location>
</feature>
<feature type="turn" evidence="3">
    <location>
        <begin position="318"/>
        <end position="321"/>
    </location>
</feature>
<feature type="helix" evidence="3">
    <location>
        <begin position="323"/>
        <end position="337"/>
    </location>
</feature>
<feature type="turn" evidence="2">
    <location>
        <begin position="338"/>
        <end position="340"/>
    </location>
</feature>
<feature type="helix" evidence="3">
    <location>
        <begin position="341"/>
        <end position="356"/>
    </location>
</feature>
<feature type="helix" evidence="3">
    <location>
        <begin position="357"/>
        <end position="361"/>
    </location>
</feature>
<feature type="strand" evidence="3">
    <location>
        <begin position="365"/>
        <end position="370"/>
    </location>
</feature>
<feature type="strand" evidence="3">
    <location>
        <begin position="375"/>
        <end position="381"/>
    </location>
</feature>
<feature type="helix" evidence="3">
    <location>
        <begin position="385"/>
        <end position="394"/>
    </location>
</feature>
<feature type="strand" evidence="3">
    <location>
        <begin position="405"/>
        <end position="408"/>
    </location>
</feature>
<feature type="helix" evidence="3">
    <location>
        <begin position="416"/>
        <end position="433"/>
    </location>
</feature>
<reference key="1">
    <citation type="submission" date="1998-01" db="EMBL/GenBank/DDBJ databases">
        <title>Cloning, sequencing, and identification of Mycobacterium bovis BCG biotin biosynthetic genes by complementing two Mycobacterium smegmatis biotin mutants.</title>
        <authorList>
            <person name="Yu S."/>
            <person name="Jacobs W.R. Jr."/>
        </authorList>
    </citation>
    <scope>NUCLEOTIDE SEQUENCE [GENOMIC DNA]</scope>
    <source>
        <strain>BCG / Pasteur</strain>
    </source>
</reference>
<reference key="2">
    <citation type="journal article" date="2003" name="Proc. Natl. Acad. Sci. U.S.A.">
        <title>The complete genome sequence of Mycobacterium bovis.</title>
        <authorList>
            <person name="Garnier T."/>
            <person name="Eiglmeier K."/>
            <person name="Camus J.-C."/>
            <person name="Medina N."/>
            <person name="Mansoor H."/>
            <person name="Pryor M."/>
            <person name="Duthoy S."/>
            <person name="Grondin S."/>
            <person name="Lacroix C."/>
            <person name="Monsempe C."/>
            <person name="Simon S."/>
            <person name="Harris B."/>
            <person name="Atkin R."/>
            <person name="Doggett J."/>
            <person name="Mayes R."/>
            <person name="Keating L."/>
            <person name="Wheeler P.R."/>
            <person name="Parkhill J."/>
            <person name="Barrell B.G."/>
            <person name="Cole S.T."/>
            <person name="Gordon S.V."/>
            <person name="Hewinson R.G."/>
        </authorList>
    </citation>
    <scope>NUCLEOTIDE SEQUENCE [LARGE SCALE GENOMIC DNA]</scope>
    <source>
        <strain>ATCC BAA-935 / AF2122/97</strain>
    </source>
</reference>
<reference key="3">
    <citation type="journal article" date="2017" name="Genome Announc.">
        <title>Updated reference genome sequence and annotation of Mycobacterium bovis AF2122/97.</title>
        <authorList>
            <person name="Malone K.M."/>
            <person name="Farrell D."/>
            <person name="Stuber T.P."/>
            <person name="Schubert O.T."/>
            <person name="Aebersold R."/>
            <person name="Robbe-Austerman S."/>
            <person name="Gordon S.V."/>
        </authorList>
    </citation>
    <scope>NUCLEOTIDE SEQUENCE [LARGE SCALE GENOMIC DNA]</scope>
    <scope>GENOME REANNOTATION</scope>
    <source>
        <strain>ATCC BAA-935 / AF2122/97</strain>
    </source>
</reference>
<evidence type="ECO:0000255" key="1">
    <source>
        <dbReference type="HAMAP-Rule" id="MF_00834"/>
    </source>
</evidence>
<evidence type="ECO:0007829" key="2">
    <source>
        <dbReference type="PDB" id="5KGS"/>
    </source>
</evidence>
<evidence type="ECO:0007829" key="3">
    <source>
        <dbReference type="PDB" id="5TE2"/>
    </source>
</evidence>
<dbReference type="EC" id="2.6.1.62" evidence="1"/>
<dbReference type="EMBL" id="AF041819">
    <property type="protein sequence ID" value="AAB96956.1"/>
    <property type="molecule type" value="Genomic_DNA"/>
</dbReference>
<dbReference type="EMBL" id="LT708304">
    <property type="protein sequence ID" value="SIU00198.1"/>
    <property type="molecule type" value="Genomic_DNA"/>
</dbReference>
<dbReference type="RefSeq" id="NP_855247.1">
    <property type="nucleotide sequence ID" value="NC_002945.3"/>
</dbReference>
<dbReference type="RefSeq" id="WP_003407803.1">
    <property type="nucleotide sequence ID" value="NC_002945.4"/>
</dbReference>
<dbReference type="PDB" id="5KGS">
    <property type="method" value="X-ray"/>
    <property type="resolution" value="2.10 A"/>
    <property type="chains" value="A/B=1-437"/>
</dbReference>
<dbReference type="PDB" id="5KGT">
    <property type="method" value="X-ray"/>
    <property type="resolution" value="2.25 A"/>
    <property type="chains" value="A/B=1-437"/>
</dbReference>
<dbReference type="PDB" id="5TE2">
    <property type="method" value="X-ray"/>
    <property type="resolution" value="1.80 A"/>
    <property type="chains" value="A/B=1-437"/>
</dbReference>
<dbReference type="PDBsum" id="5KGS"/>
<dbReference type="PDBsum" id="5KGT"/>
<dbReference type="PDBsum" id="5TE2"/>
<dbReference type="SMR" id="P0A4X7"/>
<dbReference type="KEGG" id="mbo:BQ2027_MB1595"/>
<dbReference type="PATRIC" id="fig|233413.5.peg.1742"/>
<dbReference type="UniPathway" id="UPA00078">
    <property type="reaction ID" value="UER00160"/>
</dbReference>
<dbReference type="Proteomes" id="UP000001419">
    <property type="component" value="Chromosome"/>
</dbReference>
<dbReference type="GO" id="GO:0005737">
    <property type="term" value="C:cytoplasm"/>
    <property type="evidence" value="ECO:0007669"/>
    <property type="project" value="UniProtKB-SubCell"/>
</dbReference>
<dbReference type="GO" id="GO:0004015">
    <property type="term" value="F:adenosylmethionine-8-amino-7-oxononanoate transaminase activity"/>
    <property type="evidence" value="ECO:0007669"/>
    <property type="project" value="UniProtKB-UniRule"/>
</dbReference>
<dbReference type="GO" id="GO:0030170">
    <property type="term" value="F:pyridoxal phosphate binding"/>
    <property type="evidence" value="ECO:0007669"/>
    <property type="project" value="UniProtKB-UniRule"/>
</dbReference>
<dbReference type="GO" id="GO:0009102">
    <property type="term" value="P:biotin biosynthetic process"/>
    <property type="evidence" value="ECO:0007669"/>
    <property type="project" value="UniProtKB-UniRule"/>
</dbReference>
<dbReference type="CDD" id="cd00610">
    <property type="entry name" value="OAT_like"/>
    <property type="match status" value="1"/>
</dbReference>
<dbReference type="FunFam" id="3.40.640.10:FF:000041">
    <property type="entry name" value="Adenosylmethionine-8-amino-7-oxononanoate aminotransferase"/>
    <property type="match status" value="1"/>
</dbReference>
<dbReference type="Gene3D" id="3.90.1150.10">
    <property type="entry name" value="Aspartate Aminotransferase, domain 1"/>
    <property type="match status" value="1"/>
</dbReference>
<dbReference type="Gene3D" id="3.40.640.10">
    <property type="entry name" value="Type I PLP-dependent aspartate aminotransferase-like (Major domain)"/>
    <property type="match status" value="1"/>
</dbReference>
<dbReference type="HAMAP" id="MF_00834">
    <property type="entry name" value="BioA"/>
    <property type="match status" value="1"/>
</dbReference>
<dbReference type="InterPro" id="IPR005814">
    <property type="entry name" value="Aminotrans_3"/>
</dbReference>
<dbReference type="InterPro" id="IPR049704">
    <property type="entry name" value="Aminotrans_3_PPA_site"/>
</dbReference>
<dbReference type="InterPro" id="IPR005815">
    <property type="entry name" value="BioA"/>
</dbReference>
<dbReference type="InterPro" id="IPR015424">
    <property type="entry name" value="PyrdxlP-dep_Trfase"/>
</dbReference>
<dbReference type="InterPro" id="IPR015421">
    <property type="entry name" value="PyrdxlP-dep_Trfase_major"/>
</dbReference>
<dbReference type="InterPro" id="IPR015422">
    <property type="entry name" value="PyrdxlP-dep_Trfase_small"/>
</dbReference>
<dbReference type="NCBIfam" id="TIGR00508">
    <property type="entry name" value="bioA"/>
    <property type="match status" value="1"/>
</dbReference>
<dbReference type="NCBIfam" id="NF004624">
    <property type="entry name" value="PRK05964.1"/>
    <property type="match status" value="1"/>
</dbReference>
<dbReference type="PANTHER" id="PTHR42684">
    <property type="entry name" value="ADENOSYLMETHIONINE-8-AMINO-7-OXONONANOATE AMINOTRANSFERASE"/>
    <property type="match status" value="1"/>
</dbReference>
<dbReference type="PANTHER" id="PTHR42684:SF17">
    <property type="entry name" value="ADENOSYLMETHIONINE-8-AMINO-7-OXONONANOATE AMINOTRANSFERASE"/>
    <property type="match status" value="1"/>
</dbReference>
<dbReference type="Pfam" id="PF00202">
    <property type="entry name" value="Aminotran_3"/>
    <property type="match status" value="1"/>
</dbReference>
<dbReference type="SUPFAM" id="SSF53383">
    <property type="entry name" value="PLP-dependent transferases"/>
    <property type="match status" value="1"/>
</dbReference>
<dbReference type="PROSITE" id="PS00600">
    <property type="entry name" value="AA_TRANSFER_CLASS_3"/>
    <property type="match status" value="1"/>
</dbReference>
<name>BIOA_MYCBO</name>
<accession>P0A4X7</accession>
<accession>A0A1R3XYQ6</accession>
<accession>O06622</accession>
<accession>X2BIJ6</accession>
<organism>
    <name type="scientific">Mycobacterium bovis (strain ATCC BAA-935 / AF2122/97)</name>
    <dbReference type="NCBI Taxonomy" id="233413"/>
    <lineage>
        <taxon>Bacteria</taxon>
        <taxon>Bacillati</taxon>
        <taxon>Actinomycetota</taxon>
        <taxon>Actinomycetes</taxon>
        <taxon>Mycobacteriales</taxon>
        <taxon>Mycobacteriaceae</taxon>
        <taxon>Mycobacterium</taxon>
        <taxon>Mycobacterium tuberculosis complex</taxon>
    </lineage>
</organism>
<comment type="function">
    <text evidence="1">Catalyzes the transfer of the alpha-amino group from S-adenosyl-L-methionine (SAM) to 7-keto-8-aminopelargonic acid (KAPA) to form 7,8-diaminopelargonic acid (DAPA). It is the only aminotransferase known to utilize SAM as an amino donor.</text>
</comment>
<comment type="catalytic activity">
    <reaction evidence="1">
        <text>(8S)-8-amino-7-oxononanoate + S-adenosyl-L-methionine = S-adenosyl-4-methylsulfanyl-2-oxobutanoate + (7R,8S)-7,8-diammoniononanoate</text>
        <dbReference type="Rhea" id="RHEA:16861"/>
        <dbReference type="ChEBI" id="CHEBI:16490"/>
        <dbReference type="ChEBI" id="CHEBI:59789"/>
        <dbReference type="ChEBI" id="CHEBI:149468"/>
        <dbReference type="ChEBI" id="CHEBI:149469"/>
        <dbReference type="EC" id="2.6.1.62"/>
    </reaction>
</comment>
<comment type="cofactor">
    <cofactor evidence="1">
        <name>pyridoxal 5'-phosphate</name>
        <dbReference type="ChEBI" id="CHEBI:597326"/>
    </cofactor>
</comment>
<comment type="pathway">
    <text evidence="1">Cofactor biosynthesis; biotin biosynthesis; 7,8-diaminononanoate from 8-amino-7-oxononanoate (SAM route): step 1/1.</text>
</comment>
<comment type="subunit">
    <text evidence="1">Homodimer.</text>
</comment>
<comment type="subcellular location">
    <subcellularLocation>
        <location evidence="1">Cytoplasm</location>
    </subcellularLocation>
</comment>
<comment type="similarity">
    <text evidence="1">Belongs to the class-III pyridoxal-phosphate-dependent aminotransferase family. BioA subfamily.</text>
</comment>